<dbReference type="EMBL" id="AB194952">
    <property type="protein sequence ID" value="BAE00096.1"/>
    <property type="molecule type" value="Genomic_DNA"/>
</dbReference>
<dbReference type="SMR" id="Q4R1S0"/>
<dbReference type="Proteomes" id="UP000007912">
    <property type="component" value="Genome"/>
</dbReference>
<dbReference type="GO" id="GO:0005576">
    <property type="term" value="C:extracellular region"/>
    <property type="evidence" value="ECO:0007669"/>
    <property type="project" value="UniProtKB-SubCell"/>
</dbReference>
<dbReference type="GO" id="GO:0043657">
    <property type="term" value="C:host cell"/>
    <property type="evidence" value="ECO:0007669"/>
    <property type="project" value="GOC"/>
</dbReference>
<dbReference type="GO" id="GO:0030430">
    <property type="term" value="C:host cell cytoplasm"/>
    <property type="evidence" value="ECO:0007669"/>
    <property type="project" value="UniProtKB-UniRule"/>
</dbReference>
<dbReference type="GO" id="GO:0042025">
    <property type="term" value="C:host cell nucleus"/>
    <property type="evidence" value="ECO:0007669"/>
    <property type="project" value="UniProtKB-SubCell"/>
</dbReference>
<dbReference type="GO" id="GO:0039619">
    <property type="term" value="C:T=4 icosahedral viral capsid"/>
    <property type="evidence" value="ECO:0007669"/>
    <property type="project" value="UniProtKB-UniRule"/>
</dbReference>
<dbReference type="GO" id="GO:0003677">
    <property type="term" value="F:DNA binding"/>
    <property type="evidence" value="ECO:0007669"/>
    <property type="project" value="UniProtKB-UniRule"/>
</dbReference>
<dbReference type="GO" id="GO:0003723">
    <property type="term" value="F:RNA binding"/>
    <property type="evidence" value="ECO:0007669"/>
    <property type="project" value="UniProtKB-UniRule"/>
</dbReference>
<dbReference type="GO" id="GO:0005198">
    <property type="term" value="F:structural molecule activity"/>
    <property type="evidence" value="ECO:0007669"/>
    <property type="project" value="UniProtKB-UniRule"/>
</dbReference>
<dbReference type="GO" id="GO:0075521">
    <property type="term" value="P:microtubule-dependent intracellular transport of viral material towards nucleus"/>
    <property type="evidence" value="ECO:0007669"/>
    <property type="project" value="UniProtKB-UniRule"/>
</dbReference>
<dbReference type="GO" id="GO:0046718">
    <property type="term" value="P:symbiont entry into host cell"/>
    <property type="evidence" value="ECO:0007669"/>
    <property type="project" value="UniProtKB-UniRule"/>
</dbReference>
<dbReference type="GO" id="GO:0075732">
    <property type="term" value="P:viral penetration into host nucleus"/>
    <property type="evidence" value="ECO:0007669"/>
    <property type="project" value="UniProtKB-UniRule"/>
</dbReference>
<dbReference type="FunFam" id="1.10.4090.10:FF:000001">
    <property type="entry name" value="Capsid protein"/>
    <property type="match status" value="1"/>
</dbReference>
<dbReference type="Gene3D" id="1.10.4090.10">
    <property type="entry name" value="Viral capsid, core domain supefamily, Hepatitis B virus"/>
    <property type="match status" value="1"/>
</dbReference>
<dbReference type="HAMAP" id="MF_04076">
    <property type="entry name" value="HBV_HBEAG"/>
    <property type="match status" value="1"/>
</dbReference>
<dbReference type="InterPro" id="IPR013195">
    <property type="entry name" value="Hepatitis_B_virus_capsid_N"/>
</dbReference>
<dbReference type="InterPro" id="IPR002006">
    <property type="entry name" value="Hepatitis_core"/>
</dbReference>
<dbReference type="InterPro" id="IPR036459">
    <property type="entry name" value="Viral_capsid_core_dom_sf_HBV"/>
</dbReference>
<dbReference type="Pfam" id="PF08290">
    <property type="entry name" value="Hep_core_N"/>
    <property type="match status" value="1"/>
</dbReference>
<dbReference type="Pfam" id="PF00906">
    <property type="entry name" value="Hepatitis_core"/>
    <property type="match status" value="2"/>
</dbReference>
<dbReference type="SUPFAM" id="SSF47852">
    <property type="entry name" value="Hepatitis B viral capsid (hbcag)"/>
    <property type="match status" value="1"/>
</dbReference>
<proteinExistence type="inferred from homology"/>
<reference key="1">
    <citation type="journal article" date="2005" name="J. Gen. Virol.">
        <title>A new subtype (subgenotype) Ac (A3) of hepatitis B virus and recombination between genotypes A and E in Cameroon.</title>
        <authorList>
            <person name="Kurbanov F."/>
            <person name="Tanaka Y."/>
            <person name="Fujiwara K."/>
            <person name="Sugauchi F."/>
            <person name="Mbanya D."/>
            <person name="Zekeng L."/>
            <person name="Ndembi N."/>
            <person name="Ngansop C."/>
            <person name="Kaptue L."/>
            <person name="Miura T."/>
            <person name="Ido E."/>
            <person name="Hayami M."/>
            <person name="Ichimura H."/>
            <person name="Mizokami M."/>
        </authorList>
    </citation>
    <scope>NUCLEOTIDE SEQUENCE [GENOMIC DNA]</scope>
</reference>
<feature type="signal peptide" evidence="2">
    <location>
        <begin position="1"/>
        <end position="19"/>
    </location>
</feature>
<feature type="chain" id="PRO_0000324700" description="External core antigen" evidence="2">
    <location>
        <begin position="20"/>
        <end position="214"/>
    </location>
</feature>
<feature type="propeptide" id="PRO_0000324701" evidence="1">
    <location>
        <begin position="186"/>
        <end position="214"/>
    </location>
</feature>
<feature type="repeat" description="1; half-length">
    <location>
        <begin position="186"/>
        <end position="192"/>
    </location>
</feature>
<feature type="repeat" description="2">
    <location>
        <begin position="193"/>
        <end position="200"/>
    </location>
</feature>
<feature type="repeat" description="3">
    <location>
        <begin position="201"/>
        <end position="208"/>
    </location>
</feature>
<feature type="region of interest" description="HBEAG" evidence="2">
    <location>
        <begin position="25"/>
        <end position="27"/>
    </location>
</feature>
<feature type="region of interest" description="Disordered" evidence="3">
    <location>
        <begin position="164"/>
        <end position="214"/>
    </location>
</feature>
<feature type="region of interest" description="3 X 8 AA repeats of S-P-R-R-R-R-S-Q">
    <location>
        <begin position="186"/>
        <end position="208"/>
    </location>
</feature>
<feature type="compositionally biased region" description="Basic residues" evidence="3">
    <location>
        <begin position="178"/>
        <end position="207"/>
    </location>
</feature>
<feature type="site" description="Cleavage; by host" evidence="2">
    <location>
        <begin position="185"/>
        <end position="186"/>
    </location>
</feature>
<feature type="disulfide bond" description="Interchain" evidence="2">
    <location>
        <position position="77"/>
    </location>
</feature>
<feature type="disulfide bond" description="Interchain" evidence="2">
    <location>
        <position position="90"/>
    </location>
</feature>
<organismHost>
    <name type="scientific">Homo sapiens</name>
    <name type="common">Human</name>
    <dbReference type="NCBI Taxonomy" id="9606"/>
</organismHost>
<organismHost>
    <name type="scientific">Pan troglodytes</name>
    <name type="common">Chimpanzee</name>
    <dbReference type="NCBI Taxonomy" id="9598"/>
</organismHost>
<evidence type="ECO:0000250" key="1"/>
<evidence type="ECO:0000255" key="2">
    <source>
        <dbReference type="HAMAP-Rule" id="MF_04076"/>
    </source>
</evidence>
<evidence type="ECO:0000256" key="3">
    <source>
        <dbReference type="SAM" id="MobiDB-lite"/>
    </source>
</evidence>
<comment type="function">
    <text evidence="2">May regulate immune response to the intracellular capsid in acting as a T-cell tolerogen, by having an immunoregulatory effect which prevents destruction of infected cells by cytotoxic T-cells. This immune regulation may predispose to chronicity during perinatal infections and prevent severe liver injury during adult infections.</text>
</comment>
<comment type="subunit">
    <text evidence="2">Homodimerizes.</text>
</comment>
<comment type="subcellular location">
    <subcellularLocation>
        <location evidence="2">Secreted</location>
    </subcellularLocation>
    <subcellularLocation>
        <location evidence="2">Host nucleus</location>
    </subcellularLocation>
</comment>
<comment type="alternative products">
    <event type="alternative initiation"/>
    <isoform>
        <id>Q4R1S0-1</id>
        <name>External core antigen</name>
        <sequence type="displayed"/>
    </isoform>
    <isoform>
        <id>P0C698-1</id>
        <name>Capsid protein</name>
        <sequence type="external"/>
    </isoform>
</comment>
<comment type="PTM">
    <text evidence="2">Phosphorylated.</text>
</comment>
<comment type="PTM">
    <text evidence="2">Cleaved by host furin.</text>
</comment>
<comment type="similarity">
    <text evidence="2">Belongs to the orthohepadnavirus precore antigen family.</text>
</comment>
<accession>Q4R1S0</accession>
<gene>
    <name evidence="2" type="primary">C</name>
</gene>
<keyword id="KW-0024">Alternative initiation</keyword>
<keyword id="KW-1015">Disulfide bond</keyword>
<keyword id="KW-1048">Host nucleus</keyword>
<keyword id="KW-0945">Host-virus interaction</keyword>
<keyword id="KW-0677">Repeat</keyword>
<keyword id="KW-0964">Secreted</keyword>
<keyword id="KW-0732">Signal</keyword>
<keyword id="KW-0899">Viral immunoevasion</keyword>
<protein>
    <recommendedName>
        <fullName evidence="2">External core antigen</fullName>
    </recommendedName>
    <alternativeName>
        <fullName evidence="2">HBeAg</fullName>
    </alternativeName>
    <alternativeName>
        <fullName evidence="2">Precore protein</fullName>
    </alternativeName>
    <alternativeName>
        <fullName evidence="2">p25</fullName>
    </alternativeName>
</protein>
<organism>
    <name type="scientific">Hepatitis B virus genotype A3 (isolate Cameroon/CMR711/1994)</name>
    <name type="common">HBV-A</name>
    <dbReference type="NCBI Taxonomy" id="489459"/>
    <lineage>
        <taxon>Viruses</taxon>
        <taxon>Riboviria</taxon>
        <taxon>Pararnavirae</taxon>
        <taxon>Artverviricota</taxon>
        <taxon>Revtraviricetes</taxon>
        <taxon>Blubervirales</taxon>
        <taxon>Hepadnaviridae</taxon>
        <taxon>Orthohepadnavirus</taxon>
        <taxon>Hepatitis B virus</taxon>
    </lineage>
</organism>
<sequence length="214" mass="24682">MQLFHLCLIISCTCPTLQASKLCLGWLWGMDIDPYKEFGASVELLSFLPSDFFPSVRDLLDTSAALYREALESPEHCSPHHTALRQAILCWGELMTLATWVGNNLQDPASRDQVVNYVNTNMGLKIRQLLWFHISCLTFGRQTVLEYLVSFGVWIRTPPPYRPPNAPILSTLPETTVVRRRDRGRSPRRRTPSPRRRRSQSPRRRRSQSRESQC</sequence>
<name>HBEAG_HBVA9</name>